<feature type="chain" id="PRO_0000174799" description="Co-chaperonin GroES">
    <location>
        <begin position="1"/>
        <end position="96"/>
    </location>
</feature>
<proteinExistence type="inferred from homology"/>
<name>CH10_PASMU</name>
<evidence type="ECO:0000255" key="1">
    <source>
        <dbReference type="HAMAP-Rule" id="MF_00580"/>
    </source>
</evidence>
<evidence type="ECO:0000305" key="2"/>
<reference key="1">
    <citation type="journal article" date="1995" name="Gene">
        <title>Cloning and sequence of the groESL heat-shock operon of Pasteurella multocida.</title>
        <authorList>
            <person name="Love B.C."/>
            <person name="Hansen L.M."/>
            <person name="Hirsh D.C."/>
        </authorList>
    </citation>
    <scope>NUCLEOTIDE SEQUENCE [GENOMIC DNA]</scope>
    <source>
        <strain>ATCC 15742 / P1059</strain>
    </source>
</reference>
<reference key="2">
    <citation type="journal article" date="2001" name="Proc. Natl. Acad. Sci. U.S.A.">
        <title>Complete genomic sequence of Pasteurella multocida Pm70.</title>
        <authorList>
            <person name="May B.J."/>
            <person name="Zhang Q."/>
            <person name="Li L.L."/>
            <person name="Paustian M.L."/>
            <person name="Whittam T.S."/>
            <person name="Kapur V."/>
        </authorList>
    </citation>
    <scope>NUCLEOTIDE SEQUENCE [LARGE SCALE GENOMIC DNA]</scope>
    <source>
        <strain>Pm70</strain>
    </source>
</reference>
<dbReference type="EMBL" id="U30165">
    <property type="protein sequence ID" value="AAA84915.1"/>
    <property type="molecule type" value="Genomic_DNA"/>
</dbReference>
<dbReference type="EMBL" id="AE004439">
    <property type="protein sequence ID" value="AAK03190.1"/>
    <property type="molecule type" value="Genomic_DNA"/>
</dbReference>
<dbReference type="PIR" id="JC4518">
    <property type="entry name" value="JC4518"/>
</dbReference>
<dbReference type="RefSeq" id="WP_005717461.1">
    <property type="nucleotide sequence ID" value="NC_002663.1"/>
</dbReference>
<dbReference type="SMR" id="Q59686"/>
<dbReference type="STRING" id="272843.PM1106"/>
<dbReference type="EnsemblBacteria" id="AAK03190">
    <property type="protein sequence ID" value="AAK03190"/>
    <property type="gene ID" value="PM1106"/>
</dbReference>
<dbReference type="KEGG" id="pmu:PM1106"/>
<dbReference type="HOGENOM" id="CLU_132825_1_1_6"/>
<dbReference type="OrthoDB" id="9806791at2"/>
<dbReference type="Proteomes" id="UP000000809">
    <property type="component" value="Chromosome"/>
</dbReference>
<dbReference type="GO" id="GO:0005737">
    <property type="term" value="C:cytoplasm"/>
    <property type="evidence" value="ECO:0007669"/>
    <property type="project" value="UniProtKB-SubCell"/>
</dbReference>
<dbReference type="GO" id="GO:0005524">
    <property type="term" value="F:ATP binding"/>
    <property type="evidence" value="ECO:0007669"/>
    <property type="project" value="InterPro"/>
</dbReference>
<dbReference type="GO" id="GO:0046872">
    <property type="term" value="F:metal ion binding"/>
    <property type="evidence" value="ECO:0007669"/>
    <property type="project" value="TreeGrafter"/>
</dbReference>
<dbReference type="GO" id="GO:0044183">
    <property type="term" value="F:protein folding chaperone"/>
    <property type="evidence" value="ECO:0007669"/>
    <property type="project" value="InterPro"/>
</dbReference>
<dbReference type="GO" id="GO:0051087">
    <property type="term" value="F:protein-folding chaperone binding"/>
    <property type="evidence" value="ECO:0007669"/>
    <property type="project" value="TreeGrafter"/>
</dbReference>
<dbReference type="GO" id="GO:0051082">
    <property type="term" value="F:unfolded protein binding"/>
    <property type="evidence" value="ECO:0007669"/>
    <property type="project" value="TreeGrafter"/>
</dbReference>
<dbReference type="GO" id="GO:0051085">
    <property type="term" value="P:chaperone cofactor-dependent protein refolding"/>
    <property type="evidence" value="ECO:0007669"/>
    <property type="project" value="TreeGrafter"/>
</dbReference>
<dbReference type="CDD" id="cd00320">
    <property type="entry name" value="cpn10"/>
    <property type="match status" value="1"/>
</dbReference>
<dbReference type="FunFam" id="2.30.33.40:FF:000001">
    <property type="entry name" value="10 kDa chaperonin"/>
    <property type="match status" value="1"/>
</dbReference>
<dbReference type="Gene3D" id="2.30.33.40">
    <property type="entry name" value="GroES chaperonin"/>
    <property type="match status" value="1"/>
</dbReference>
<dbReference type="HAMAP" id="MF_00580">
    <property type="entry name" value="CH10"/>
    <property type="match status" value="1"/>
</dbReference>
<dbReference type="InterPro" id="IPR020818">
    <property type="entry name" value="Chaperonin_GroES"/>
</dbReference>
<dbReference type="InterPro" id="IPR037124">
    <property type="entry name" value="Chaperonin_GroES_sf"/>
</dbReference>
<dbReference type="InterPro" id="IPR018369">
    <property type="entry name" value="Chaprnonin_Cpn10_CS"/>
</dbReference>
<dbReference type="InterPro" id="IPR011032">
    <property type="entry name" value="GroES-like_sf"/>
</dbReference>
<dbReference type="NCBIfam" id="NF001526">
    <property type="entry name" value="PRK00364.1-1"/>
    <property type="match status" value="1"/>
</dbReference>
<dbReference type="NCBIfam" id="NF001531">
    <property type="entry name" value="PRK00364.2-2"/>
    <property type="match status" value="1"/>
</dbReference>
<dbReference type="PANTHER" id="PTHR10772">
    <property type="entry name" value="10 KDA HEAT SHOCK PROTEIN"/>
    <property type="match status" value="1"/>
</dbReference>
<dbReference type="PANTHER" id="PTHR10772:SF58">
    <property type="entry name" value="CO-CHAPERONIN GROES"/>
    <property type="match status" value="1"/>
</dbReference>
<dbReference type="Pfam" id="PF00166">
    <property type="entry name" value="Cpn10"/>
    <property type="match status" value="1"/>
</dbReference>
<dbReference type="PRINTS" id="PR00297">
    <property type="entry name" value="CHAPERONIN10"/>
</dbReference>
<dbReference type="SMART" id="SM00883">
    <property type="entry name" value="Cpn10"/>
    <property type="match status" value="1"/>
</dbReference>
<dbReference type="SUPFAM" id="SSF50129">
    <property type="entry name" value="GroES-like"/>
    <property type="match status" value="1"/>
</dbReference>
<dbReference type="PROSITE" id="PS00681">
    <property type="entry name" value="CHAPERONINS_CPN10"/>
    <property type="match status" value="1"/>
</dbReference>
<protein>
    <recommendedName>
        <fullName evidence="1">Co-chaperonin GroES</fullName>
    </recommendedName>
    <alternativeName>
        <fullName evidence="1">10 kDa chaperonin</fullName>
    </alternativeName>
    <alternativeName>
        <fullName evidence="1">Chaperonin-10</fullName>
        <shortName evidence="1">Cpn10</shortName>
    </alternativeName>
</protein>
<keyword id="KW-0143">Chaperone</keyword>
<keyword id="KW-0963">Cytoplasm</keyword>
<keyword id="KW-1185">Reference proteome</keyword>
<comment type="function">
    <text evidence="1">Together with the chaperonin GroEL, plays an essential role in assisting protein folding. The GroEL-GroES system forms a nano-cage that allows encapsulation of the non-native substrate proteins and provides a physical environment optimized to promote and accelerate protein folding. GroES binds to the apical surface of the GroEL ring, thereby capping the opening of the GroEL channel.</text>
</comment>
<comment type="subunit">
    <text evidence="1">Heptamer of 7 subunits arranged in a ring. Interacts with the chaperonin GroEL.</text>
</comment>
<comment type="subcellular location">
    <subcellularLocation>
        <location evidence="1">Cytoplasm</location>
    </subcellularLocation>
</comment>
<comment type="similarity">
    <text evidence="1 2">Belongs to the GroES chaperonin family.</text>
</comment>
<gene>
    <name evidence="1" type="primary">groES</name>
    <name evidence="1" type="synonym">groS</name>
    <name type="ordered locus">PM1106</name>
</gene>
<sequence>MNIRPLHDRVIIKREEVETRSAGGIVLTGSAATKSTRAKVLAVGKGRILENGTVQPLDVKVGDTVIFNDGYGVKAEKIDGEEVLIISENDILAIVE</sequence>
<accession>Q59686</accession>
<organism>
    <name type="scientific">Pasteurella multocida (strain Pm70)</name>
    <dbReference type="NCBI Taxonomy" id="272843"/>
    <lineage>
        <taxon>Bacteria</taxon>
        <taxon>Pseudomonadati</taxon>
        <taxon>Pseudomonadota</taxon>
        <taxon>Gammaproteobacteria</taxon>
        <taxon>Pasteurellales</taxon>
        <taxon>Pasteurellaceae</taxon>
        <taxon>Pasteurella</taxon>
    </lineage>
</organism>